<reference key="1">
    <citation type="journal article" date="2005" name="J. Bacteriol.">
        <title>The genome of Sulfolobus acidocaldarius, a model organism of the Crenarchaeota.</title>
        <authorList>
            <person name="Chen L."/>
            <person name="Bruegger K."/>
            <person name="Skovgaard M."/>
            <person name="Redder P."/>
            <person name="She Q."/>
            <person name="Torarinsson E."/>
            <person name="Greve B."/>
            <person name="Awayez M."/>
            <person name="Zibat A."/>
            <person name="Klenk H.-P."/>
            <person name="Garrett R.A."/>
        </authorList>
    </citation>
    <scope>NUCLEOTIDE SEQUENCE [LARGE SCALE GENOMIC DNA]</scope>
    <source>
        <strain>ATCC 33909 / DSM 639 / JCM 8929 / NBRC 15157 / NCIMB 11770</strain>
    </source>
</reference>
<reference key="2">
    <citation type="journal article" date="2018" name="Appl. Microbiol. Biotechnol.">
        <title>Two trehalose-hydrolyzing enzymes from Crenarchaeon Sulfolobus acidocaldarius exhibit distinct activities and affinities toward trehalose.</title>
        <authorList>
            <person name="Yuasa M."/>
            <person name="Okamura T."/>
            <person name="Kimura M."/>
            <person name="Honda S."/>
            <person name="Shin Y."/>
            <person name="Kawakita M."/>
            <person name="Oyama F."/>
            <person name="Sakaguchi M."/>
        </authorList>
    </citation>
    <scope>PROTEIN SEQUENCE OF 1-15</scope>
    <scope>FUNCTION</scope>
    <scope>CATALYTIC ACTIVITY</scope>
    <scope>BIOPHYSICOCHEMICAL PROPERTIES</scope>
    <scope>MUTAGENESIS OF GLU-374; GLY-523; GLU-524 AND HIS-525</scope>
    <source>
        <strain>ATCC 33909 / DSM 639 / JCM 8929 / NBRC 15157 / NCIMB 11770</strain>
    </source>
</reference>
<reference key="3">
    <citation type="journal article" date="2018" name="J. Microbiol. Biotechnol.">
        <title>Saci_1816: A trehalase that catalyzes trehalose degradation in the thermoacidophilic Crenarchaeon Sulfolobus acidocaldarius.</title>
        <authorList>
            <person name="Lee J."/>
            <person name="Lee A."/>
            <person name="Moon K."/>
            <person name="Choi K.H."/>
            <person name="Cha J."/>
        </authorList>
    </citation>
    <scope>FUNCTION</scope>
    <scope>CATALYTIC ACTIVITY</scope>
    <scope>BIOPHYSICOCHEMICAL PROPERTIES</scope>
    <source>
        <strain>ATCC 33909 / DSM 639 / JCM 8929 / NBRC 15157 / NCIMB 11770</strain>
    </source>
</reference>
<proteinExistence type="evidence at protein level"/>
<name>TREH1_SULAC</name>
<comment type="function">
    <text evidence="1 2">Catalyzes the hydrolysis of alpha,alpha-trehalose into two molecules of D-glucose.</text>
</comment>
<comment type="catalytic activity">
    <reaction evidence="1 2">
        <text>alpha,alpha-trehalose + H2O = alpha-D-glucose + beta-D-glucose</text>
        <dbReference type="Rhea" id="RHEA:32675"/>
        <dbReference type="ChEBI" id="CHEBI:15377"/>
        <dbReference type="ChEBI" id="CHEBI:15903"/>
        <dbReference type="ChEBI" id="CHEBI:16551"/>
        <dbReference type="ChEBI" id="CHEBI:17925"/>
        <dbReference type="EC" id="3.2.1.28"/>
    </reaction>
</comment>
<comment type="biophysicochemical properties">
    <kinetics>
        <KM evidence="1">41.8 mM for trehalose (at 50 degrees Celsius and pH 4.0)</KM>
        <KM evidence="1">54.5 mM for trehalose (at 60 degrees Celsius and pH 4.0)</KM>
        <text evidence="1">kcat is 77.0 sec(-1) at 50 degrees Celsius and pH 4.0. kcat is 102.5 sec(-1) at 60 degrees Celsius and pH 4.0.</text>
    </kinetics>
    <phDependence>
        <text evidence="1 2">Optimum pH is 4.0 (PubMed:29574614, PubMed:29642287). More than half of the maximal activity is observed over a range between pH 3.3 and 4.0 (PubMed:29574614).</text>
    </phDependence>
    <temperatureDependence>
        <text evidence="1 2">Optimum temperature is 60 degrees Celsius.</text>
    </temperatureDependence>
</comment>
<comment type="pathway">
    <text evidence="4">Glycan degradation; trehalose degradation; D-glucose from alpha,alpha-trehalose: step 1/1.</text>
</comment>
<comment type="similarity">
    <text evidence="4">Belongs to the glycosyl hydrolase 15 family.</text>
</comment>
<evidence type="ECO:0000269" key="1">
    <source>
    </source>
</evidence>
<evidence type="ECO:0000269" key="2">
    <source>
    </source>
</evidence>
<evidence type="ECO:0000303" key="3">
    <source>
    </source>
</evidence>
<evidence type="ECO:0000305" key="4"/>
<evidence type="ECO:0000312" key="5">
    <source>
        <dbReference type="EMBL" id="AAY81122.1"/>
    </source>
</evidence>
<sequence>MLGMKPLGFIGNGLTSALVDNGSIVWLTFPRFDSPSVFGKLLDDNAGEFSIRPVEDKFKVSQSYLVPNVLSTTFKSSNGKAEIVDLMPIGEKAIIRKVRTEIPLSFKIIPMFNYGLYRPIIRRKDDGIQFLNPVSRECLSLLSDVPTDEIKPPGTTLYLVYSSDCAYGPLDKGKQLENDLENSFNLTIDYWKDKIRSNDEVWRTSVGVLLGLIYSPSGSSIAAATTSLPEAVGDSRNWDYRFVWVRDSSMISEALLYSGYVVEARRILNFMLALVNFTAKPLLHPLYAVDGSDPPPEIEIPWLSGYMNSRPVRVGNAAASQIQLDIEGFLVDAIYKYYKYTSDRVFVEENWDKIKYIGDWVSKNWMLKDAGMWEDRGDPKHYTHSKVMMWVALDRIEKIMNVKIHEKDEIKEWVMRNCVKDGSFVRSSDSNDVDANLLTLPLYDFIDVKDPIFLKTLKRIEDELYVDGFVKRYSQDFMGEAKHPFALATIWLARVYIRLGRKERAMELLDKVLKPSGTLYLIGEHIDVENMEYTGNYPQAFVHAQLLLALKEVKGLST</sequence>
<protein>
    <recommendedName>
        <fullName evidence="3">Trehalase 1</fullName>
        <ecNumber evidence="1 2">3.2.1.28</ecNumber>
    </recommendedName>
    <alternativeName>
        <fullName evidence="4">Alpha,alpha-trehalase</fullName>
    </alternativeName>
    <alternativeName>
        <fullName evidence="3">SaTreH1</fullName>
    </alternativeName>
</protein>
<gene>
    <name type="primary">treH1</name>
    <name evidence="5" type="ordered locus">Saci_1816</name>
</gene>
<organism>
    <name type="scientific">Sulfolobus acidocaldarius (strain ATCC 33909 / DSM 639 / JCM 8929 / NBRC 15157 / NCIMB 11770)</name>
    <dbReference type="NCBI Taxonomy" id="330779"/>
    <lineage>
        <taxon>Archaea</taxon>
        <taxon>Thermoproteota</taxon>
        <taxon>Thermoprotei</taxon>
        <taxon>Sulfolobales</taxon>
        <taxon>Sulfolobaceae</taxon>
        <taxon>Sulfolobus</taxon>
    </lineage>
</organism>
<accession>Q4J7W0</accession>
<feature type="chain" id="PRO_0000448957" description="Trehalase 1">
    <location>
        <begin position="1"/>
        <end position="558"/>
    </location>
</feature>
<feature type="mutagenesis site" description="Less than 1% of wild-type activity." evidence="1">
    <original>E</original>
    <variation>Q</variation>
    <location>
        <position position="374"/>
    </location>
</feature>
<feature type="mutagenesis site" description="No change of activity." evidence="1">
    <original>G</original>
    <variation>S</variation>
    <location>
        <position position="523"/>
    </location>
</feature>
<feature type="mutagenesis site" description="Less than 1% of wild-type activity." evidence="1">
    <original>E</original>
    <variation>Q</variation>
    <location>
        <position position="524"/>
    </location>
</feature>
<feature type="mutagenesis site" description="15% of wild-type activity." evidence="1">
    <original>H</original>
    <variation>E</variation>
    <location>
        <position position="525"/>
    </location>
</feature>
<keyword id="KW-0119">Carbohydrate metabolism</keyword>
<keyword id="KW-0903">Direct protein sequencing</keyword>
<keyword id="KW-0326">Glycosidase</keyword>
<keyword id="KW-0378">Hydrolase</keyword>
<keyword id="KW-1185">Reference proteome</keyword>
<dbReference type="EC" id="3.2.1.28" evidence="1 2"/>
<dbReference type="EMBL" id="CP000077">
    <property type="protein sequence ID" value="AAY81122.1"/>
    <property type="molecule type" value="Genomic_DNA"/>
</dbReference>
<dbReference type="SMR" id="Q4J7W0"/>
<dbReference type="STRING" id="330779.Saci_1816"/>
<dbReference type="CAZy" id="GH15">
    <property type="family name" value="Glycoside Hydrolase Family 15"/>
</dbReference>
<dbReference type="KEGG" id="sai:Saci_1816"/>
<dbReference type="PATRIC" id="fig|330779.12.peg.1761"/>
<dbReference type="eggNOG" id="arCOG03286">
    <property type="taxonomic scope" value="Archaea"/>
</dbReference>
<dbReference type="HOGENOM" id="CLU_010399_3_1_2"/>
<dbReference type="UniPathway" id="UPA00300">
    <property type="reaction ID" value="UER00535"/>
</dbReference>
<dbReference type="Proteomes" id="UP000001018">
    <property type="component" value="Chromosome"/>
</dbReference>
<dbReference type="GO" id="GO:0004555">
    <property type="term" value="F:alpha,alpha-trehalase activity"/>
    <property type="evidence" value="ECO:0007669"/>
    <property type="project" value="UniProtKB-EC"/>
</dbReference>
<dbReference type="GO" id="GO:0005993">
    <property type="term" value="P:trehalose catabolic process"/>
    <property type="evidence" value="ECO:0007669"/>
    <property type="project" value="UniProtKB-UniPathway"/>
</dbReference>
<dbReference type="Gene3D" id="1.50.10.10">
    <property type="match status" value="1"/>
</dbReference>
<dbReference type="InterPro" id="IPR008928">
    <property type="entry name" value="6-hairpin_glycosidase_sf"/>
</dbReference>
<dbReference type="InterPro" id="IPR012341">
    <property type="entry name" value="6hp_glycosidase-like_sf"/>
</dbReference>
<dbReference type="InterPro" id="IPR011613">
    <property type="entry name" value="GH15-like"/>
</dbReference>
<dbReference type="InterPro" id="IPR053494">
    <property type="entry name" value="GH15_Enzymes"/>
</dbReference>
<dbReference type="InterPro" id="IPR045582">
    <property type="entry name" value="Trehalase-like_N"/>
</dbReference>
<dbReference type="NCBIfam" id="NF041084">
    <property type="entry name" value="trehalase_H1_Arch"/>
    <property type="match status" value="1"/>
</dbReference>
<dbReference type="PANTHER" id="PTHR31616:SF0">
    <property type="entry name" value="GLUCAN 1,4-ALPHA-GLUCOSIDASE"/>
    <property type="match status" value="1"/>
</dbReference>
<dbReference type="PANTHER" id="PTHR31616">
    <property type="entry name" value="TREHALASE"/>
    <property type="match status" value="1"/>
</dbReference>
<dbReference type="Pfam" id="PF00723">
    <property type="entry name" value="Glyco_hydro_15"/>
    <property type="match status" value="1"/>
</dbReference>
<dbReference type="Pfam" id="PF19291">
    <property type="entry name" value="TREH_N"/>
    <property type="match status" value="1"/>
</dbReference>
<dbReference type="SUPFAM" id="SSF48208">
    <property type="entry name" value="Six-hairpin glycosidases"/>
    <property type="match status" value="1"/>
</dbReference>